<gene>
    <name evidence="1" type="primary">rpl30</name>
    <name type="ordered locus">HQ_2821A</name>
</gene>
<sequence length="154" mass="17162">MQAIIQLRGPVNMSGAVEDTLAMLNLHRVNHCALVPETETYRGMITKVNEYVAHGEPSVEVLSTVLERRVESENSDETVDETWLEAHTEYDDFDALATALIEEETTLRDQGLSPVLRLHPPRGGHRGQKHPTAEGGQIGVHDTDQINELLEAMR</sequence>
<keyword id="KW-1185">Reference proteome</keyword>
<keyword id="KW-0687">Ribonucleoprotein</keyword>
<keyword id="KW-0689">Ribosomal protein</keyword>
<dbReference type="EMBL" id="AM180088">
    <property type="protein sequence ID" value="CAJ52928.1"/>
    <property type="molecule type" value="Genomic_DNA"/>
</dbReference>
<dbReference type="RefSeq" id="WP_011572041.1">
    <property type="nucleotide sequence ID" value="NC_008212.1"/>
</dbReference>
<dbReference type="SMR" id="Q18GH0"/>
<dbReference type="STRING" id="362976.HQ_2821A"/>
<dbReference type="GeneID" id="4194618"/>
<dbReference type="KEGG" id="hwa:HQ_2821A"/>
<dbReference type="eggNOG" id="arCOG04086">
    <property type="taxonomic scope" value="Archaea"/>
</dbReference>
<dbReference type="HOGENOM" id="CLU_055156_6_0_2"/>
<dbReference type="Proteomes" id="UP000001975">
    <property type="component" value="Chromosome"/>
</dbReference>
<dbReference type="GO" id="GO:0022625">
    <property type="term" value="C:cytosolic large ribosomal subunit"/>
    <property type="evidence" value="ECO:0007669"/>
    <property type="project" value="TreeGrafter"/>
</dbReference>
<dbReference type="GO" id="GO:0003723">
    <property type="term" value="F:RNA binding"/>
    <property type="evidence" value="ECO:0007669"/>
    <property type="project" value="TreeGrafter"/>
</dbReference>
<dbReference type="GO" id="GO:0003735">
    <property type="term" value="F:structural constituent of ribosome"/>
    <property type="evidence" value="ECO:0007669"/>
    <property type="project" value="InterPro"/>
</dbReference>
<dbReference type="GO" id="GO:0000463">
    <property type="term" value="P:maturation of LSU-rRNA from tricistronic rRNA transcript (SSU-rRNA, 5.8S rRNA, LSU-rRNA)"/>
    <property type="evidence" value="ECO:0007669"/>
    <property type="project" value="TreeGrafter"/>
</dbReference>
<dbReference type="GO" id="GO:0006412">
    <property type="term" value="P:translation"/>
    <property type="evidence" value="ECO:0007669"/>
    <property type="project" value="UniProtKB-UniRule"/>
</dbReference>
<dbReference type="CDD" id="cd01657">
    <property type="entry name" value="Ribosomal_L7_archeal_euk"/>
    <property type="match status" value="1"/>
</dbReference>
<dbReference type="Gene3D" id="1.10.15.30">
    <property type="match status" value="1"/>
</dbReference>
<dbReference type="Gene3D" id="3.30.1390.20">
    <property type="entry name" value="Ribosomal protein L30, ferredoxin-like fold domain"/>
    <property type="match status" value="1"/>
</dbReference>
<dbReference type="HAMAP" id="MF_01371_A">
    <property type="entry name" value="Ribosomal_uL30_A"/>
    <property type="match status" value="1"/>
</dbReference>
<dbReference type="InterPro" id="IPR036919">
    <property type="entry name" value="Ribo_uL30_ferredoxin-like_sf"/>
</dbReference>
<dbReference type="InterPro" id="IPR039699">
    <property type="entry name" value="Ribosomal_uL30"/>
</dbReference>
<dbReference type="InterPro" id="IPR005997">
    <property type="entry name" value="Ribosomal_uL30_arc"/>
</dbReference>
<dbReference type="InterPro" id="IPR035808">
    <property type="entry name" value="Ribosomal_uL30_euk_arc"/>
</dbReference>
<dbReference type="InterPro" id="IPR016082">
    <property type="entry name" value="Ribosomal_uL30_ferredoxin-like"/>
</dbReference>
<dbReference type="NCBIfam" id="NF004711">
    <property type="entry name" value="PRK06049.1"/>
    <property type="match status" value="1"/>
</dbReference>
<dbReference type="NCBIfam" id="TIGR01309">
    <property type="entry name" value="uL30_arch"/>
    <property type="match status" value="1"/>
</dbReference>
<dbReference type="PANTHER" id="PTHR11524">
    <property type="entry name" value="60S RIBOSOMAL PROTEIN L7"/>
    <property type="match status" value="1"/>
</dbReference>
<dbReference type="PANTHER" id="PTHR11524:SF16">
    <property type="entry name" value="LARGE RIBOSOMAL SUBUNIT PROTEIN UL30"/>
    <property type="match status" value="1"/>
</dbReference>
<dbReference type="Pfam" id="PF00327">
    <property type="entry name" value="Ribosomal_L30"/>
    <property type="match status" value="1"/>
</dbReference>
<dbReference type="SUPFAM" id="SSF55129">
    <property type="entry name" value="Ribosomal protein L30p/L7e"/>
    <property type="match status" value="1"/>
</dbReference>
<protein>
    <recommendedName>
        <fullName evidence="1">Large ribosomal subunit protein uL30</fullName>
    </recommendedName>
    <alternativeName>
        <fullName evidence="3">50S ribosomal protein L30</fullName>
    </alternativeName>
</protein>
<evidence type="ECO:0000255" key="1">
    <source>
        <dbReference type="HAMAP-Rule" id="MF_01371"/>
    </source>
</evidence>
<evidence type="ECO:0000256" key="2">
    <source>
        <dbReference type="SAM" id="MobiDB-lite"/>
    </source>
</evidence>
<evidence type="ECO:0000305" key="3"/>
<name>RL30_HALWD</name>
<feature type="chain" id="PRO_0000273901" description="Large ribosomal subunit protein uL30">
    <location>
        <begin position="1"/>
        <end position="154"/>
    </location>
</feature>
<feature type="region of interest" description="Disordered" evidence="2">
    <location>
        <begin position="114"/>
        <end position="139"/>
    </location>
</feature>
<feature type="compositionally biased region" description="Basic residues" evidence="2">
    <location>
        <begin position="119"/>
        <end position="129"/>
    </location>
</feature>
<comment type="subunit">
    <text evidence="1">Part of the 50S ribosomal subunit.</text>
</comment>
<comment type="similarity">
    <text evidence="1">Belongs to the universal ribosomal protein uL30 family.</text>
</comment>
<organism>
    <name type="scientific">Haloquadratum walsbyi (strain DSM 16790 / HBSQ001)</name>
    <dbReference type="NCBI Taxonomy" id="362976"/>
    <lineage>
        <taxon>Archaea</taxon>
        <taxon>Methanobacteriati</taxon>
        <taxon>Methanobacteriota</taxon>
        <taxon>Stenosarchaea group</taxon>
        <taxon>Halobacteria</taxon>
        <taxon>Halobacteriales</taxon>
        <taxon>Haloferacaceae</taxon>
        <taxon>Haloquadratum</taxon>
    </lineage>
</organism>
<proteinExistence type="inferred from homology"/>
<reference key="1">
    <citation type="journal article" date="2006" name="BMC Genomics">
        <title>The genome of the square archaeon Haloquadratum walsbyi: life at the limits of water activity.</title>
        <authorList>
            <person name="Bolhuis H."/>
            <person name="Palm P."/>
            <person name="Wende A."/>
            <person name="Falb M."/>
            <person name="Rampp M."/>
            <person name="Rodriguez-Valera F."/>
            <person name="Pfeiffer F."/>
            <person name="Oesterhelt D."/>
        </authorList>
    </citation>
    <scope>NUCLEOTIDE SEQUENCE [LARGE SCALE GENOMIC DNA]</scope>
    <source>
        <strain>DSM 16790 / HBSQ001</strain>
    </source>
</reference>
<accession>Q18GH0</accession>